<gene>
    <name evidence="1 8" type="primary">purF</name>
    <name type="ordered locus">BSU06490</name>
</gene>
<proteinExistence type="evidence at protein level"/>
<protein>
    <recommendedName>
        <fullName evidence="1">Amidophosphoribosyltransferase</fullName>
        <shortName evidence="1">ATase</shortName>
        <ecNumber evidence="1 5">2.4.2.14</ecNumber>
    </recommendedName>
    <alternativeName>
        <fullName evidence="1">Glutamine phosphoribosylpyrophosphate amidotransferase</fullName>
        <shortName evidence="1">GPATase</shortName>
    </alternativeName>
</protein>
<accession>P00497</accession>
<keyword id="KW-0002">3D-structure</keyword>
<keyword id="KW-0004">4Fe-4S</keyword>
<keyword id="KW-0021">Allosteric enzyme</keyword>
<keyword id="KW-0903">Direct protein sequencing</keyword>
<keyword id="KW-0315">Glutamine amidotransferase</keyword>
<keyword id="KW-0328">Glycosyltransferase</keyword>
<keyword id="KW-0408">Iron</keyword>
<keyword id="KW-0411">Iron-sulfur</keyword>
<keyword id="KW-0460">Magnesium</keyword>
<keyword id="KW-0479">Metal-binding</keyword>
<keyword id="KW-0658">Purine biosynthesis</keyword>
<keyword id="KW-1185">Reference proteome</keyword>
<keyword id="KW-0808">Transferase</keyword>
<organism>
    <name type="scientific">Bacillus subtilis (strain 168)</name>
    <dbReference type="NCBI Taxonomy" id="224308"/>
    <lineage>
        <taxon>Bacteria</taxon>
        <taxon>Bacillati</taxon>
        <taxon>Bacillota</taxon>
        <taxon>Bacilli</taxon>
        <taxon>Bacillales</taxon>
        <taxon>Bacillaceae</taxon>
        <taxon>Bacillus</taxon>
    </lineage>
</organism>
<name>PUR1_BACSU</name>
<reference key="1">
    <citation type="journal article" date="1983" name="J. Biol. Chem.">
        <title>Cloning of the Bacillus subtilis glutamine phosphoribosylpyrophosphate amidotransferase gene in Escherichia coli. Nucleotide sequence determination and properties of the plasmid-encoded enzyme.</title>
        <authorList>
            <person name="Makaroff C.A."/>
            <person name="Zalkin H."/>
            <person name="Switzer R.L."/>
            <person name="Vollmer S.J."/>
        </authorList>
    </citation>
    <scope>NUCLEOTIDE SEQUENCE [GENOMIC DNA]</scope>
</reference>
<reference key="2">
    <citation type="journal article" date="1987" name="J. Biol. Chem.">
        <title>Cloning and characterization of a 12-gene cluster from Bacillus subtilis encoding nine enzymes for de novo purine nucleotide synthesis.</title>
        <authorList>
            <person name="Ebbole D.J."/>
            <person name="Zalkin H."/>
        </authorList>
    </citation>
    <scope>NUCLEOTIDE SEQUENCE [GENOMIC DNA]</scope>
</reference>
<reference key="3">
    <citation type="journal article" date="1997" name="Nature">
        <title>The complete genome sequence of the Gram-positive bacterium Bacillus subtilis.</title>
        <authorList>
            <person name="Kunst F."/>
            <person name="Ogasawara N."/>
            <person name="Moszer I."/>
            <person name="Albertini A.M."/>
            <person name="Alloni G."/>
            <person name="Azevedo V."/>
            <person name="Bertero M.G."/>
            <person name="Bessieres P."/>
            <person name="Bolotin A."/>
            <person name="Borchert S."/>
            <person name="Borriss R."/>
            <person name="Boursier L."/>
            <person name="Brans A."/>
            <person name="Braun M."/>
            <person name="Brignell S.C."/>
            <person name="Bron S."/>
            <person name="Brouillet S."/>
            <person name="Bruschi C.V."/>
            <person name="Caldwell B."/>
            <person name="Capuano V."/>
            <person name="Carter N.M."/>
            <person name="Choi S.-K."/>
            <person name="Codani J.-J."/>
            <person name="Connerton I.F."/>
            <person name="Cummings N.J."/>
            <person name="Daniel R.A."/>
            <person name="Denizot F."/>
            <person name="Devine K.M."/>
            <person name="Duesterhoeft A."/>
            <person name="Ehrlich S.D."/>
            <person name="Emmerson P.T."/>
            <person name="Entian K.-D."/>
            <person name="Errington J."/>
            <person name="Fabret C."/>
            <person name="Ferrari E."/>
            <person name="Foulger D."/>
            <person name="Fritz C."/>
            <person name="Fujita M."/>
            <person name="Fujita Y."/>
            <person name="Fuma S."/>
            <person name="Galizzi A."/>
            <person name="Galleron N."/>
            <person name="Ghim S.-Y."/>
            <person name="Glaser P."/>
            <person name="Goffeau A."/>
            <person name="Golightly E.J."/>
            <person name="Grandi G."/>
            <person name="Guiseppi G."/>
            <person name="Guy B.J."/>
            <person name="Haga K."/>
            <person name="Haiech J."/>
            <person name="Harwood C.R."/>
            <person name="Henaut A."/>
            <person name="Hilbert H."/>
            <person name="Holsappel S."/>
            <person name="Hosono S."/>
            <person name="Hullo M.-F."/>
            <person name="Itaya M."/>
            <person name="Jones L.-M."/>
            <person name="Joris B."/>
            <person name="Karamata D."/>
            <person name="Kasahara Y."/>
            <person name="Klaerr-Blanchard M."/>
            <person name="Klein C."/>
            <person name="Kobayashi Y."/>
            <person name="Koetter P."/>
            <person name="Koningstein G."/>
            <person name="Krogh S."/>
            <person name="Kumano M."/>
            <person name="Kurita K."/>
            <person name="Lapidus A."/>
            <person name="Lardinois S."/>
            <person name="Lauber J."/>
            <person name="Lazarevic V."/>
            <person name="Lee S.-M."/>
            <person name="Levine A."/>
            <person name="Liu H."/>
            <person name="Masuda S."/>
            <person name="Mauel C."/>
            <person name="Medigue C."/>
            <person name="Medina N."/>
            <person name="Mellado R.P."/>
            <person name="Mizuno M."/>
            <person name="Moestl D."/>
            <person name="Nakai S."/>
            <person name="Noback M."/>
            <person name="Noone D."/>
            <person name="O'Reilly M."/>
            <person name="Ogawa K."/>
            <person name="Ogiwara A."/>
            <person name="Oudega B."/>
            <person name="Park S.-H."/>
            <person name="Parro V."/>
            <person name="Pohl T.M."/>
            <person name="Portetelle D."/>
            <person name="Porwollik S."/>
            <person name="Prescott A.M."/>
            <person name="Presecan E."/>
            <person name="Pujic P."/>
            <person name="Purnelle B."/>
            <person name="Rapoport G."/>
            <person name="Rey M."/>
            <person name="Reynolds S."/>
            <person name="Rieger M."/>
            <person name="Rivolta C."/>
            <person name="Rocha E."/>
            <person name="Roche B."/>
            <person name="Rose M."/>
            <person name="Sadaie Y."/>
            <person name="Sato T."/>
            <person name="Scanlan E."/>
            <person name="Schleich S."/>
            <person name="Schroeter R."/>
            <person name="Scoffone F."/>
            <person name="Sekiguchi J."/>
            <person name="Sekowska A."/>
            <person name="Seror S.J."/>
            <person name="Serror P."/>
            <person name="Shin B.-S."/>
            <person name="Soldo B."/>
            <person name="Sorokin A."/>
            <person name="Tacconi E."/>
            <person name="Takagi T."/>
            <person name="Takahashi H."/>
            <person name="Takemaru K."/>
            <person name="Takeuchi M."/>
            <person name="Tamakoshi A."/>
            <person name="Tanaka T."/>
            <person name="Terpstra P."/>
            <person name="Tognoni A."/>
            <person name="Tosato V."/>
            <person name="Uchiyama S."/>
            <person name="Vandenbol M."/>
            <person name="Vannier F."/>
            <person name="Vassarotti A."/>
            <person name="Viari A."/>
            <person name="Wambutt R."/>
            <person name="Wedler E."/>
            <person name="Wedler H."/>
            <person name="Weitzenegger T."/>
            <person name="Winters P."/>
            <person name="Wipat A."/>
            <person name="Yamamoto H."/>
            <person name="Yamane K."/>
            <person name="Yasumoto K."/>
            <person name="Yata K."/>
            <person name="Yoshida K."/>
            <person name="Yoshikawa H.-F."/>
            <person name="Zumstein E."/>
            <person name="Yoshikawa H."/>
            <person name="Danchin A."/>
        </authorList>
    </citation>
    <scope>NUCLEOTIDE SEQUENCE [LARGE SCALE GENOMIC DNA]</scope>
    <source>
        <strain>168</strain>
    </source>
</reference>
<reference key="4">
    <citation type="journal article" date="2009" name="Microbiology">
        <title>From a consortium sequence to a unified sequence: the Bacillus subtilis 168 reference genome a decade later.</title>
        <authorList>
            <person name="Barbe V."/>
            <person name="Cruveiller S."/>
            <person name="Kunst F."/>
            <person name="Lenoble P."/>
            <person name="Meurice G."/>
            <person name="Sekowska A."/>
            <person name="Vallenet D."/>
            <person name="Wang T."/>
            <person name="Moszer I."/>
            <person name="Medigue C."/>
            <person name="Danchin A."/>
        </authorList>
    </citation>
    <scope>SEQUENCE REVISION TO 413</scope>
</reference>
<reference key="5">
    <citation type="journal article" date="1981" name="Biochemistry">
        <title>Purification and properties of glutamine phosphoribosylpyrophosphate amidotransferase from Bacillus subtilis.</title>
        <authorList>
            <person name="Wong J.Y."/>
            <person name="Bernlohr D.A."/>
            <person name="Turnbough C.L."/>
            <person name="Switzer R.L."/>
        </authorList>
    </citation>
    <scope>FUNCTION</scope>
    <scope>CATALYTIC ACTIVITY</scope>
</reference>
<reference key="6">
    <citation type="journal article" date="1983" name="J. Biol. Chem.">
        <title>The glutamine-utilizing site of Bacillus subtilis glutamine phosphoribosylpyrophosphate amidotransferase.</title>
        <authorList>
            <person name="Vollmer S.J."/>
            <person name="Switzer R.L."/>
            <person name="Hermodson M.A."/>
            <person name="Bower S.G."/>
            <person name="Zalkin H."/>
        </authorList>
    </citation>
    <scope>ACTIVE SITE</scope>
    <scope>PROTEIN SEQUENCE OF 12-35</scope>
</reference>
<reference key="7">
    <citation type="journal article" date="1984" name="J. Biol. Chem.">
        <title>Glutamine amidotransferase function. Replacement of the active-site cysteine in glutamine phosphoribosylpyrophosphate amidotransferase by site-directed mutagenesis.</title>
        <authorList>
            <person name="Maentsaelae P."/>
            <person name="Zalkin H."/>
        </authorList>
    </citation>
    <scope>MUTAGENESIS OF CYS-12</scope>
</reference>
<reference key="8">
    <citation type="journal article" date="1986" name="J. Biol. Chem.">
        <title>Mutagenesis of ligands to the [4 Fe-4S] center of Bacillus subtilis glutamine phosphoribosylpyrophosphate amidotransferase.</title>
        <authorList>
            <person name="Makaroff C.A."/>
            <person name="Paluh J.L."/>
            <person name="Zalkin H."/>
        </authorList>
    </citation>
    <scope>MUTAGENESIS</scope>
</reference>
<reference key="9">
    <citation type="journal article" date="1994" name="Science">
        <title>Structure of the allosteric regulatory enzyme of purine biosynthesis.</title>
        <authorList>
            <person name="Smith J.L."/>
            <person name="Zaluzec E.J."/>
            <person name="Wery J.-P."/>
            <person name="Niu L."/>
            <person name="Switzer R.L."/>
            <person name="Zalkin H."/>
            <person name="Satow Y."/>
        </authorList>
    </citation>
    <scope>X-RAY CRYSTALLOGRAPHY (3.0 ANGSTROMS) IN COMPLEX WITH IRON-SULFUR (4FE-4S)</scope>
    <scope>ACTIVITY REGULATION</scope>
    <scope>SUBUNIT</scope>
</reference>
<reference key="10">
    <citation type="journal article" date="1997" name="Biochemistry">
        <title>Mechanism of the synergistic end-product regulation of Bacillus subtilis glutamine phosphoribosylpyrophosphate amidotransferase by nucleotides.</title>
        <authorList>
            <person name="Chen S."/>
            <person name="Tomchick D.R."/>
            <person name="Wolle D."/>
            <person name="Hu P."/>
            <person name="Smith J.L."/>
            <person name="Switzer R.L."/>
            <person name="Zalkin H."/>
        </authorList>
    </citation>
    <scope>X-RAY CRYSTALLOGRAPHY (2.8 ANGSTROMS) IN COMPLEX WITH IRON-SULFUR (4FE-4S) AND MAGNESIUM</scope>
</reference>
<dbReference type="EC" id="2.4.2.14" evidence="1 5"/>
<dbReference type="EMBL" id="J02732">
    <property type="protein sequence ID" value="AAA22680.1"/>
    <property type="molecule type" value="Genomic_DNA"/>
</dbReference>
<dbReference type="EMBL" id="AL009126">
    <property type="protein sequence ID" value="CAB12469.2"/>
    <property type="molecule type" value="Genomic_DNA"/>
</dbReference>
<dbReference type="PIR" id="A00582">
    <property type="entry name" value="XQBS"/>
</dbReference>
<dbReference type="RefSeq" id="NP_388531.2">
    <property type="nucleotide sequence ID" value="NC_000964.3"/>
</dbReference>
<dbReference type="RefSeq" id="WP_003233947.1">
    <property type="nucleotide sequence ID" value="NZ_OZ025638.1"/>
</dbReference>
<dbReference type="PDB" id="1AO0">
    <property type="method" value="X-ray"/>
    <property type="resolution" value="2.80 A"/>
    <property type="chains" value="A/B/C/D=12-470"/>
</dbReference>
<dbReference type="PDB" id="1GPH">
    <property type="method" value="X-ray"/>
    <property type="resolution" value="3.00 A"/>
    <property type="chains" value="1/2/3/4=12-476"/>
</dbReference>
<dbReference type="PDBsum" id="1AO0"/>
<dbReference type="PDBsum" id="1GPH"/>
<dbReference type="SMR" id="P00497"/>
<dbReference type="FunCoup" id="P00497">
    <property type="interactions" value="615"/>
</dbReference>
<dbReference type="IntAct" id="P00497">
    <property type="interactions" value="1"/>
</dbReference>
<dbReference type="MINT" id="P00497"/>
<dbReference type="STRING" id="224308.BSU06490"/>
<dbReference type="DrugBank" id="DB01972">
    <property type="generic name" value="Guanosine-5'-Monophosphate"/>
</dbReference>
<dbReference type="MEROPS" id="C44.001"/>
<dbReference type="PaxDb" id="224308-BSU06490"/>
<dbReference type="EnsemblBacteria" id="CAB12469">
    <property type="protein sequence ID" value="CAB12469"/>
    <property type="gene ID" value="BSU_06490"/>
</dbReference>
<dbReference type="GeneID" id="86874918"/>
<dbReference type="GeneID" id="936046"/>
<dbReference type="KEGG" id="bsu:BSU06490"/>
<dbReference type="PATRIC" id="fig|224308.179.peg.705"/>
<dbReference type="eggNOG" id="COG0034">
    <property type="taxonomic scope" value="Bacteria"/>
</dbReference>
<dbReference type="InParanoid" id="P00497"/>
<dbReference type="OrthoDB" id="9801213at2"/>
<dbReference type="PhylomeDB" id="P00497"/>
<dbReference type="BioCyc" id="BSUB:BSU06490-MONOMER"/>
<dbReference type="BRENDA" id="2.4.2.14">
    <property type="organism ID" value="658"/>
</dbReference>
<dbReference type="UniPathway" id="UPA00074">
    <property type="reaction ID" value="UER00124"/>
</dbReference>
<dbReference type="EvolutionaryTrace" id="P00497"/>
<dbReference type="Proteomes" id="UP000001570">
    <property type="component" value="Chromosome"/>
</dbReference>
<dbReference type="GO" id="GO:0051539">
    <property type="term" value="F:4 iron, 4 sulfur cluster binding"/>
    <property type="evidence" value="ECO:0007669"/>
    <property type="project" value="UniProtKB-KW"/>
</dbReference>
<dbReference type="GO" id="GO:0004044">
    <property type="term" value="F:amidophosphoribosyltransferase activity"/>
    <property type="evidence" value="ECO:0000318"/>
    <property type="project" value="GO_Central"/>
</dbReference>
<dbReference type="GO" id="GO:0000287">
    <property type="term" value="F:magnesium ion binding"/>
    <property type="evidence" value="ECO:0007669"/>
    <property type="project" value="UniProtKB-UniRule"/>
</dbReference>
<dbReference type="GO" id="GO:0006189">
    <property type="term" value="P:'de novo' IMP biosynthetic process"/>
    <property type="evidence" value="ECO:0007669"/>
    <property type="project" value="UniProtKB-UniRule"/>
</dbReference>
<dbReference type="GO" id="GO:0009113">
    <property type="term" value="P:purine nucleobase biosynthetic process"/>
    <property type="evidence" value="ECO:0007669"/>
    <property type="project" value="InterPro"/>
</dbReference>
<dbReference type="GO" id="GO:0006164">
    <property type="term" value="P:purine nucleotide biosynthetic process"/>
    <property type="evidence" value="ECO:0000318"/>
    <property type="project" value="GO_Central"/>
</dbReference>
<dbReference type="CDD" id="cd00715">
    <property type="entry name" value="GPATase_N"/>
    <property type="match status" value="1"/>
</dbReference>
<dbReference type="CDD" id="cd06223">
    <property type="entry name" value="PRTases_typeI"/>
    <property type="match status" value="1"/>
</dbReference>
<dbReference type="Gene3D" id="3.40.50.2020">
    <property type="match status" value="1"/>
</dbReference>
<dbReference type="Gene3D" id="3.60.20.10">
    <property type="entry name" value="Glutamine Phosphoribosylpyrophosphate, subunit 1, domain 1"/>
    <property type="match status" value="1"/>
</dbReference>
<dbReference type="HAMAP" id="MF_01931">
    <property type="entry name" value="PurF"/>
    <property type="match status" value="1"/>
</dbReference>
<dbReference type="InterPro" id="IPR017932">
    <property type="entry name" value="GATase_2_dom"/>
</dbReference>
<dbReference type="InterPro" id="IPR029055">
    <property type="entry name" value="Ntn_hydrolases_N"/>
</dbReference>
<dbReference type="InterPro" id="IPR000836">
    <property type="entry name" value="PRibTrfase_dom"/>
</dbReference>
<dbReference type="InterPro" id="IPR029057">
    <property type="entry name" value="PRTase-like"/>
</dbReference>
<dbReference type="InterPro" id="IPR005854">
    <property type="entry name" value="PurF"/>
</dbReference>
<dbReference type="InterPro" id="IPR035584">
    <property type="entry name" value="PurF_N"/>
</dbReference>
<dbReference type="NCBIfam" id="TIGR01134">
    <property type="entry name" value="purF"/>
    <property type="match status" value="1"/>
</dbReference>
<dbReference type="PANTHER" id="PTHR11907">
    <property type="entry name" value="AMIDOPHOSPHORIBOSYLTRANSFERASE"/>
    <property type="match status" value="1"/>
</dbReference>
<dbReference type="Pfam" id="PF13522">
    <property type="entry name" value="GATase_6"/>
    <property type="match status" value="1"/>
</dbReference>
<dbReference type="PIRSF" id="PIRSF000485">
    <property type="entry name" value="Amd_phspho_trans"/>
    <property type="match status" value="1"/>
</dbReference>
<dbReference type="SUPFAM" id="SSF56235">
    <property type="entry name" value="N-terminal nucleophile aminohydrolases (Ntn hydrolases)"/>
    <property type="match status" value="1"/>
</dbReference>
<dbReference type="SUPFAM" id="SSF53271">
    <property type="entry name" value="PRTase-like"/>
    <property type="match status" value="1"/>
</dbReference>
<dbReference type="PROSITE" id="PS51278">
    <property type="entry name" value="GATASE_TYPE_2"/>
    <property type="match status" value="1"/>
</dbReference>
<dbReference type="PROSITE" id="PS00103">
    <property type="entry name" value="PUR_PYR_PR_TRANSFER"/>
    <property type="match status" value="1"/>
</dbReference>
<comment type="function">
    <text evidence="1 5">Catalyzes the formation of phosphoribosylamine from phosphoribosylpyrophosphate (PRPP) and glutamine.</text>
</comment>
<comment type="catalytic activity">
    <reaction evidence="1 5">
        <text>5-phospho-beta-D-ribosylamine + L-glutamate + diphosphate = 5-phospho-alpha-D-ribose 1-diphosphate + L-glutamine + H2O</text>
        <dbReference type="Rhea" id="RHEA:14905"/>
        <dbReference type="ChEBI" id="CHEBI:15377"/>
        <dbReference type="ChEBI" id="CHEBI:29985"/>
        <dbReference type="ChEBI" id="CHEBI:33019"/>
        <dbReference type="ChEBI" id="CHEBI:58017"/>
        <dbReference type="ChEBI" id="CHEBI:58359"/>
        <dbReference type="ChEBI" id="CHEBI:58681"/>
        <dbReference type="EC" id="2.4.2.14"/>
    </reaction>
</comment>
<comment type="cofactor">
    <cofactor evidence="1 7">
        <name>Mg(2+)</name>
        <dbReference type="ChEBI" id="CHEBI:18420"/>
    </cofactor>
    <text evidence="1 7">Binds 1 Mg(2+) ion per subunit.</text>
</comment>
<comment type="cofactor">
    <cofactor evidence="6">
        <name>[4Fe-4S] cluster</name>
        <dbReference type="ChEBI" id="CHEBI:49883"/>
    </cofactor>
    <text evidence="6">Binds 1 [4Fe-4S] cluster per subunit. The [4Fe-4S] cluster requires a potential lower than -600 mV for reduction.</text>
</comment>
<comment type="activity regulation">
    <text evidence="6">Allosterically regulated; subject to end product regulation by purine nucleotides.</text>
</comment>
<comment type="pathway">
    <text evidence="1">Purine metabolism; IMP biosynthesis via de novo pathway; N(1)-(5-phospho-D-ribosyl)glycinamide from 5-phospho-alpha-D-ribose 1-diphosphate: step 1/2.</text>
</comment>
<comment type="subunit">
    <text evidence="6">Homotetramer.</text>
</comment>
<comment type="similarity">
    <text evidence="1 9">In the C-terminal section; belongs to the purine/pyrimidine phosphoribosyltransferase family.</text>
</comment>
<feature type="propeptide" id="PRO_0000029251" evidence="4">
    <location>
        <begin position="1"/>
        <end position="11"/>
    </location>
</feature>
<feature type="chain" id="PRO_0000029252" description="Amidophosphoribosyltransferase">
    <location>
        <begin position="12"/>
        <end position="476"/>
    </location>
</feature>
<feature type="domain" description="Glutamine amidotransferase type-2" evidence="1">
    <location>
        <begin position="12"/>
        <end position="231"/>
    </location>
</feature>
<feature type="active site" description="Nucleophile" evidence="1 4">
    <location>
        <position position="12"/>
    </location>
</feature>
<feature type="binding site" evidence="1 6 7">
    <location>
        <position position="247"/>
    </location>
    <ligand>
        <name>[4Fe-4S] cluster</name>
        <dbReference type="ChEBI" id="CHEBI:49883"/>
    </ligand>
</feature>
<feature type="binding site" evidence="1 7">
    <location>
        <position position="294"/>
    </location>
    <ligand>
        <name>Mg(2+)</name>
        <dbReference type="ChEBI" id="CHEBI:18420"/>
    </ligand>
</feature>
<feature type="binding site" evidence="1 7">
    <location>
        <position position="356"/>
    </location>
    <ligand>
        <name>Mg(2+)</name>
        <dbReference type="ChEBI" id="CHEBI:18420"/>
    </ligand>
</feature>
<feature type="binding site" evidence="1 7">
    <location>
        <position position="357"/>
    </location>
    <ligand>
        <name>Mg(2+)</name>
        <dbReference type="ChEBI" id="CHEBI:18420"/>
    </ligand>
</feature>
<feature type="binding site" evidence="1 6 7">
    <location>
        <position position="393"/>
    </location>
    <ligand>
        <name>[4Fe-4S] cluster</name>
        <dbReference type="ChEBI" id="CHEBI:49883"/>
    </ligand>
</feature>
<feature type="binding site" evidence="1 6 7">
    <location>
        <position position="448"/>
    </location>
    <ligand>
        <name>[4Fe-4S] cluster</name>
        <dbReference type="ChEBI" id="CHEBI:49883"/>
    </ligand>
</feature>
<feature type="binding site" evidence="1 6 7">
    <location>
        <position position="451"/>
    </location>
    <ligand>
        <name>[4Fe-4S] cluster</name>
        <dbReference type="ChEBI" id="CHEBI:49883"/>
    </ligand>
</feature>
<feature type="mutagenesis site" description="Loss of enzyme activity and N-terminal processing." evidence="3">
    <original>C</original>
    <variation>F</variation>
    <location>
        <position position="12"/>
    </location>
</feature>
<feature type="mutagenesis site" description="Partial loss of activity." evidence="2">
    <original>F</original>
    <variation>V</variation>
    <location>
        <position position="394"/>
    </location>
</feature>
<feature type="mutagenesis site" description="Partial loss of activity." evidence="2">
    <original>D</original>
    <variation>S</variation>
    <location>
        <position position="442"/>
    </location>
</feature>
<feature type="mutagenesis site" description="Loss of activity." evidence="2">
    <original>C</original>
    <variation>S</variation>
    <location>
        <position position="448"/>
    </location>
</feature>
<feature type="mutagenesis site" description="Loss of activity." evidence="2">
    <original>C</original>
    <variation>S</variation>
    <location>
        <position position="451"/>
    </location>
</feature>
<feature type="mutagenesis site" description="Lethal." evidence="2">
    <original>F</original>
    <variation>C</variation>
    <location>
        <position position="452"/>
    </location>
</feature>
<feature type="sequence conflict" description="In Ref. 1 and 2; AAA22680." evidence="9" ref="1 2">
    <original>E</original>
    <variation>G</variation>
    <location>
        <position position="413"/>
    </location>
</feature>
<feature type="strand" evidence="10">
    <location>
        <begin position="13"/>
        <end position="19"/>
    </location>
</feature>
<feature type="helix" evidence="10">
    <location>
        <begin position="23"/>
        <end position="33"/>
    </location>
</feature>
<feature type="helix" evidence="10">
    <location>
        <begin position="34"/>
        <end position="37"/>
    </location>
</feature>
<feature type="strand" evidence="10">
    <location>
        <begin position="40"/>
        <end position="47"/>
    </location>
</feature>
<feature type="strand" evidence="10">
    <location>
        <begin position="52"/>
        <end position="59"/>
    </location>
</feature>
<feature type="helix" evidence="10">
    <location>
        <begin position="61"/>
        <end position="64"/>
    </location>
</feature>
<feature type="strand" evidence="11">
    <location>
        <begin position="67"/>
        <end position="69"/>
    </location>
</feature>
<feature type="turn" evidence="10">
    <location>
        <begin position="70"/>
        <end position="72"/>
    </location>
</feature>
<feature type="strand" evidence="10">
    <location>
        <begin position="75"/>
        <end position="83"/>
    </location>
</feature>
<feature type="strand" evidence="11">
    <location>
        <begin position="86"/>
        <end position="88"/>
    </location>
</feature>
<feature type="helix" evidence="10">
    <location>
        <begin position="92"/>
        <end position="94"/>
    </location>
</feature>
<feature type="strand" evidence="10">
    <location>
        <begin position="95"/>
        <end position="101"/>
    </location>
</feature>
<feature type="turn" evidence="10">
    <location>
        <begin position="103"/>
        <end position="105"/>
    </location>
</feature>
<feature type="strand" evidence="10">
    <location>
        <begin position="108"/>
        <end position="116"/>
    </location>
</feature>
<feature type="helix" evidence="10">
    <location>
        <begin position="119"/>
        <end position="128"/>
    </location>
</feature>
<feature type="strand" evidence="11">
    <location>
        <begin position="133"/>
        <end position="135"/>
    </location>
</feature>
<feature type="helix" evidence="10">
    <location>
        <begin position="138"/>
        <end position="147"/>
    </location>
</feature>
<feature type="helix" evidence="10">
    <location>
        <begin position="154"/>
        <end position="162"/>
    </location>
</feature>
<feature type="strand" evidence="10">
    <location>
        <begin position="167"/>
        <end position="174"/>
    </location>
</feature>
<feature type="strand" evidence="10">
    <location>
        <begin position="176"/>
        <end position="183"/>
    </location>
</feature>
<feature type="strand" evidence="10">
    <location>
        <begin position="192"/>
        <end position="196"/>
    </location>
</feature>
<feature type="strand" evidence="10">
    <location>
        <begin position="199"/>
        <end position="205"/>
    </location>
</feature>
<feature type="helix" evidence="10">
    <location>
        <begin position="207"/>
        <end position="212"/>
    </location>
</feature>
<feature type="strand" evidence="10">
    <location>
        <begin position="215"/>
        <end position="219"/>
    </location>
</feature>
<feature type="strand" evidence="10">
    <location>
        <begin position="224"/>
        <end position="229"/>
    </location>
</feature>
<feature type="strand" evidence="10">
    <location>
        <begin position="232"/>
        <end position="238"/>
    </location>
</feature>
<feature type="helix" evidence="10">
    <location>
        <begin position="248"/>
        <end position="252"/>
    </location>
</feature>
<feature type="helix" evidence="10">
    <location>
        <begin position="266"/>
        <end position="281"/>
    </location>
</feature>
<feature type="strand" evidence="10">
    <location>
        <begin position="286"/>
        <end position="289"/>
    </location>
</feature>
<feature type="turn" evidence="10">
    <location>
        <begin position="292"/>
        <end position="295"/>
    </location>
</feature>
<feature type="helix" evidence="10">
    <location>
        <begin position="296"/>
        <end position="306"/>
    </location>
</feature>
<feature type="strand" evidence="10">
    <location>
        <begin position="314"/>
        <end position="316"/>
    </location>
</feature>
<feature type="helix" evidence="10">
    <location>
        <begin position="329"/>
        <end position="334"/>
    </location>
</feature>
<feature type="strand" evidence="10">
    <location>
        <begin position="338"/>
        <end position="342"/>
    </location>
</feature>
<feature type="helix" evidence="10">
    <location>
        <begin position="344"/>
        <end position="347"/>
    </location>
</feature>
<feature type="strand" evidence="10">
    <location>
        <begin position="351"/>
        <end position="357"/>
    </location>
</feature>
<feature type="strand" evidence="10">
    <location>
        <begin position="360"/>
        <end position="362"/>
    </location>
</feature>
<feature type="helix" evidence="10">
    <location>
        <begin position="363"/>
        <end position="374"/>
    </location>
</feature>
<feature type="strand" evidence="10">
    <location>
        <begin position="378"/>
        <end position="386"/>
    </location>
</feature>
<feature type="turn" evidence="10">
    <location>
        <begin position="397"/>
        <end position="399"/>
    </location>
</feature>
<feature type="turn" evidence="10">
    <location>
        <begin position="407"/>
        <end position="409"/>
    </location>
</feature>
<feature type="helix" evidence="10">
    <location>
        <begin position="412"/>
        <end position="419"/>
    </location>
</feature>
<feature type="strand" evidence="10">
    <location>
        <begin position="422"/>
        <end position="426"/>
    </location>
</feature>
<feature type="helix" evidence="10">
    <location>
        <begin position="429"/>
        <end position="436"/>
    </location>
</feature>
<feature type="turn" evidence="10">
    <location>
        <begin position="443"/>
        <end position="446"/>
    </location>
</feature>
<feature type="helix" evidence="10">
    <location>
        <begin position="450"/>
        <end position="453"/>
    </location>
</feature>
<feature type="helix" evidence="10">
    <location>
        <begin position="467"/>
        <end position="469"/>
    </location>
</feature>
<sequence>MLAEIKGLNEECGVFGIWGHEEAPQITYYGLHSLQHRGQEGAGIVATDGEKLTAHKGQGLITEVFQNGELSKVKGKGAIGHVRYATAGGGGYENVQPLLFRSQNNGSLALAHNGNLVNATQLKQQLENQGSIFQTSSDTEVLAHLIKRSGHFTLKDQIKNSLSMLKGAYAFLIMTETEMIVALDPNGLRPLSIGMMGDAYVVASETCAFDVVGATYLREVEPGEMLIINDEGMKSERFSMNINRSICSMEYIYFSRPDSNIDGINVHSARKNLGKMLAQESAVEADVVTGVPDSSISAAIGYAEATGIPYELGLIKNRYVGRTFIQPSQALREQGVRMKLSAVRGVVEGKRVVMVDDSIVRGTTSRRIVTMLREAGATEVHVKISSPPIAHPCFYGIDTSTHEELIASSHSVEEIRQEIGADTLSFLSVEGLLKGIGRKYDDSNCGQCLACFTGKYPTEIYQDTVLPHVKEAVLTK</sequence>
<evidence type="ECO:0000255" key="1">
    <source>
        <dbReference type="HAMAP-Rule" id="MF_01931"/>
    </source>
</evidence>
<evidence type="ECO:0000269" key="2">
    <source>
    </source>
</evidence>
<evidence type="ECO:0000269" key="3">
    <source>
    </source>
</evidence>
<evidence type="ECO:0000269" key="4">
    <source>
    </source>
</evidence>
<evidence type="ECO:0000269" key="5">
    <source>
    </source>
</evidence>
<evidence type="ECO:0000269" key="6">
    <source>
    </source>
</evidence>
<evidence type="ECO:0000269" key="7">
    <source>
    </source>
</evidence>
<evidence type="ECO:0000303" key="8">
    <source>
    </source>
</evidence>
<evidence type="ECO:0000305" key="9"/>
<evidence type="ECO:0007829" key="10">
    <source>
        <dbReference type="PDB" id="1AO0"/>
    </source>
</evidence>
<evidence type="ECO:0007829" key="11">
    <source>
        <dbReference type="PDB" id="1GPH"/>
    </source>
</evidence>